<dbReference type="EMBL" id="CU329670">
    <property type="protein sequence ID" value="CAB16733.1"/>
    <property type="molecule type" value="Genomic_DNA"/>
</dbReference>
<dbReference type="PIR" id="T38688">
    <property type="entry name" value="T38688"/>
</dbReference>
<dbReference type="RefSeq" id="NP_593603.1">
    <property type="nucleotide sequence ID" value="NM_001019034.1"/>
</dbReference>
<dbReference type="SMR" id="O14128"/>
<dbReference type="BioGRID" id="278204">
    <property type="interactions" value="49"/>
</dbReference>
<dbReference type="FunCoup" id="O14128">
    <property type="interactions" value="2"/>
</dbReference>
<dbReference type="IntAct" id="O14128">
    <property type="interactions" value="4"/>
</dbReference>
<dbReference type="STRING" id="284812.O14128"/>
<dbReference type="iPTMnet" id="O14128"/>
<dbReference type="PaxDb" id="4896-SPAC3C7.02c.1"/>
<dbReference type="EnsemblFungi" id="SPAC3C7.02c.1">
    <property type="protein sequence ID" value="SPAC3C7.02c.1:pep"/>
    <property type="gene ID" value="SPAC3C7.02c"/>
</dbReference>
<dbReference type="GeneID" id="2541709"/>
<dbReference type="KEGG" id="spo:2541709"/>
<dbReference type="PomBase" id="SPAC3C7.02c">
    <property type="gene designation" value="pil2"/>
</dbReference>
<dbReference type="VEuPathDB" id="FungiDB:SPAC3C7.02c"/>
<dbReference type="eggNOG" id="ENOG502QQ1T">
    <property type="taxonomic scope" value="Eukaryota"/>
</dbReference>
<dbReference type="HOGENOM" id="CLU_046464_0_1_1"/>
<dbReference type="InParanoid" id="O14128"/>
<dbReference type="OMA" id="ANQLSYW"/>
<dbReference type="PhylomeDB" id="O14128"/>
<dbReference type="PRO" id="PR:O14128"/>
<dbReference type="Proteomes" id="UP000002485">
    <property type="component" value="Chromosome I"/>
</dbReference>
<dbReference type="GO" id="GO:0036286">
    <property type="term" value="C:eisosome filament"/>
    <property type="evidence" value="ECO:0000318"/>
    <property type="project" value="GO_Central"/>
</dbReference>
<dbReference type="GO" id="GO:0005886">
    <property type="term" value="C:plasma membrane"/>
    <property type="evidence" value="ECO:0000314"/>
    <property type="project" value="PomBase"/>
</dbReference>
<dbReference type="GO" id="GO:0008289">
    <property type="term" value="F:lipid binding"/>
    <property type="evidence" value="ECO:0000318"/>
    <property type="project" value="GO_Central"/>
</dbReference>
<dbReference type="GO" id="GO:0070941">
    <property type="term" value="P:eisosome assembly"/>
    <property type="evidence" value="ECO:0000318"/>
    <property type="project" value="GO_Central"/>
</dbReference>
<dbReference type="GO" id="GO:0006897">
    <property type="term" value="P:endocytosis"/>
    <property type="evidence" value="ECO:0000318"/>
    <property type="project" value="GO_Central"/>
</dbReference>
<dbReference type="FunFam" id="1.20.1270.60:FF:000005">
    <property type="entry name" value="Sphingolipid long chain base-responsive pil1"/>
    <property type="match status" value="1"/>
</dbReference>
<dbReference type="Gene3D" id="1.20.1270.60">
    <property type="entry name" value="Arfaptin homology (AH) domain/BAR domain"/>
    <property type="match status" value="1"/>
</dbReference>
<dbReference type="InterPro" id="IPR027267">
    <property type="entry name" value="AH/BAR_dom_sf"/>
</dbReference>
<dbReference type="InterPro" id="IPR028245">
    <property type="entry name" value="PIL1/LSP1"/>
</dbReference>
<dbReference type="PANTHER" id="PTHR31962">
    <property type="entry name" value="SPHINGOLIPID LONG CHAIN BASE-RESPONSIVE PROTEIN PIL1"/>
    <property type="match status" value="1"/>
</dbReference>
<dbReference type="PANTHER" id="PTHR31962:SF7">
    <property type="entry name" value="SPHINGOLIPID LONG CHAIN BASE-RESPONSIVE PROTEIN PIL2-RELATED"/>
    <property type="match status" value="1"/>
</dbReference>
<dbReference type="Pfam" id="PF13805">
    <property type="entry name" value="Pil1"/>
    <property type="match status" value="1"/>
</dbReference>
<gene>
    <name type="primary">pil2</name>
    <name type="ORF">SPAC3C7.02c</name>
</gene>
<organism>
    <name type="scientific">Schizosaccharomyces pombe (strain 972 / ATCC 24843)</name>
    <name type="common">Fission yeast</name>
    <dbReference type="NCBI Taxonomy" id="284812"/>
    <lineage>
        <taxon>Eukaryota</taxon>
        <taxon>Fungi</taxon>
        <taxon>Dikarya</taxon>
        <taxon>Ascomycota</taxon>
        <taxon>Taphrinomycotina</taxon>
        <taxon>Schizosaccharomycetes</taxon>
        <taxon>Schizosaccharomycetales</taxon>
        <taxon>Schizosaccharomycetaceae</taxon>
        <taxon>Schizosaccharomyces</taxon>
    </lineage>
</organism>
<accession>O14128</accession>
<keyword id="KW-0597">Phosphoprotein</keyword>
<keyword id="KW-1185">Reference proteome</keyword>
<feature type="chain" id="PRO_0000308181" description="Probable sphingolipid long chain base-responsive protein pil2">
    <location>
        <begin position="1"/>
        <end position="383"/>
    </location>
</feature>
<feature type="region of interest" description="Disordered" evidence="2">
    <location>
        <begin position="292"/>
        <end position="336"/>
    </location>
</feature>
<feature type="region of interest" description="Disordered" evidence="2">
    <location>
        <begin position="356"/>
        <end position="383"/>
    </location>
</feature>
<feature type="compositionally biased region" description="Low complexity" evidence="2">
    <location>
        <begin position="311"/>
        <end position="324"/>
    </location>
</feature>
<feature type="compositionally biased region" description="Polar residues" evidence="2">
    <location>
        <begin position="325"/>
        <end position="336"/>
    </location>
</feature>
<feature type="compositionally biased region" description="Polar residues" evidence="2">
    <location>
        <begin position="368"/>
        <end position="383"/>
    </location>
</feature>
<feature type="modified residue" description="Phosphoserine" evidence="1">
    <location>
        <position position="162"/>
    </location>
</feature>
<proteinExistence type="inferred from homology"/>
<name>PIL2_SCHPO</name>
<protein>
    <recommendedName>
        <fullName>Probable sphingolipid long chain base-responsive protein pil2</fullName>
    </recommendedName>
    <alternativeName>
        <fullName>Protein kinase inhibitor pil2</fullName>
    </alternativeName>
</protein>
<comment type="function">
    <text evidence="1">Negative regulator of cell wall integrity (CWI) in unstressed cells, probably by inhibiting protein kinase ksg1/ppk21 activity and regulating their downstream CWI pathways pck2-MAP kinase pathway and protein kinase gad8 pathway. Activity may be regulated by the transient increase of sphingolipid long chain bases (LCBs) during heat stress (By similarity).</text>
</comment>
<comment type="PTM">
    <text evidence="1 3">Phosphorylated by ksg1 and ppk21. Phosphorylation is regulated by sphingolipid long chain bases (LCBs) (By similarity).</text>
</comment>
<sequence length="383" mass="43301">MGTQPSYSIHTLRAPPKAKQNQIPPSTTRRAVNVNKLGRQFRYPSVGMFTPEMAKRLAALVKMEKDLLRSYENVAMERKECANQLSYWGEDCDDDISDISDKLGVLLYEIGELEEHMVDRYDQYRVSLKTIRDIEASVQPTRVKKEKLLNSIYDVRSRDPESPKLITMEQELVREEAACLVAEAQLTNITRENFKRAFTLHIGTLLEHSEKVAILCGYAKKILDLLDDTPIVPGEPRPIYDGYNITRDYIVEAERELANWQNPFQTPEPLTDIDGLPSQSHYQTQFQASVVPRTDVINEPPRRYSHANGVTTSGTTHSYTSTGSKRYSQMGTEDYQPSFQPNILQSTQVVDNFEIGEEDDEEVGSQGVAETSMPSTSAQPIAA</sequence>
<reference evidence="4" key="1">
    <citation type="journal article" date="2002" name="Nature">
        <title>The genome sequence of Schizosaccharomyces pombe.</title>
        <authorList>
            <person name="Wood V."/>
            <person name="Gwilliam R."/>
            <person name="Rajandream M.A."/>
            <person name="Lyne M.H."/>
            <person name="Lyne R."/>
            <person name="Stewart A."/>
            <person name="Sgouros J.G."/>
            <person name="Peat N."/>
            <person name="Hayles J."/>
            <person name="Baker S.G."/>
            <person name="Basham D."/>
            <person name="Bowman S."/>
            <person name="Brooks K."/>
            <person name="Brown D."/>
            <person name="Brown S."/>
            <person name="Chillingworth T."/>
            <person name="Churcher C.M."/>
            <person name="Collins M."/>
            <person name="Connor R."/>
            <person name="Cronin A."/>
            <person name="Davis P."/>
            <person name="Feltwell T."/>
            <person name="Fraser A."/>
            <person name="Gentles S."/>
            <person name="Goble A."/>
            <person name="Hamlin N."/>
            <person name="Harris D.E."/>
            <person name="Hidalgo J."/>
            <person name="Hodgson G."/>
            <person name="Holroyd S."/>
            <person name="Hornsby T."/>
            <person name="Howarth S."/>
            <person name="Huckle E.J."/>
            <person name="Hunt S."/>
            <person name="Jagels K."/>
            <person name="James K.D."/>
            <person name="Jones L."/>
            <person name="Jones M."/>
            <person name="Leather S."/>
            <person name="McDonald S."/>
            <person name="McLean J."/>
            <person name="Mooney P."/>
            <person name="Moule S."/>
            <person name="Mungall K.L."/>
            <person name="Murphy L.D."/>
            <person name="Niblett D."/>
            <person name="Odell C."/>
            <person name="Oliver K."/>
            <person name="O'Neil S."/>
            <person name="Pearson D."/>
            <person name="Quail M.A."/>
            <person name="Rabbinowitsch E."/>
            <person name="Rutherford K.M."/>
            <person name="Rutter S."/>
            <person name="Saunders D."/>
            <person name="Seeger K."/>
            <person name="Sharp S."/>
            <person name="Skelton J."/>
            <person name="Simmonds M.N."/>
            <person name="Squares R."/>
            <person name="Squares S."/>
            <person name="Stevens K."/>
            <person name="Taylor K."/>
            <person name="Taylor R.G."/>
            <person name="Tivey A."/>
            <person name="Walsh S.V."/>
            <person name="Warren T."/>
            <person name="Whitehead S."/>
            <person name="Woodward J.R."/>
            <person name="Volckaert G."/>
            <person name="Aert R."/>
            <person name="Robben J."/>
            <person name="Grymonprez B."/>
            <person name="Weltjens I."/>
            <person name="Vanstreels E."/>
            <person name="Rieger M."/>
            <person name="Schaefer M."/>
            <person name="Mueller-Auer S."/>
            <person name="Gabel C."/>
            <person name="Fuchs M."/>
            <person name="Duesterhoeft A."/>
            <person name="Fritzc C."/>
            <person name="Holzer E."/>
            <person name="Moestl D."/>
            <person name="Hilbert H."/>
            <person name="Borzym K."/>
            <person name="Langer I."/>
            <person name="Beck A."/>
            <person name="Lehrach H."/>
            <person name="Reinhardt R."/>
            <person name="Pohl T.M."/>
            <person name="Eger P."/>
            <person name="Zimmermann W."/>
            <person name="Wedler H."/>
            <person name="Wambutt R."/>
            <person name="Purnelle B."/>
            <person name="Goffeau A."/>
            <person name="Cadieu E."/>
            <person name="Dreano S."/>
            <person name="Gloux S."/>
            <person name="Lelaure V."/>
            <person name="Mottier S."/>
            <person name="Galibert F."/>
            <person name="Aves S.J."/>
            <person name="Xiang Z."/>
            <person name="Hunt C."/>
            <person name="Moore K."/>
            <person name="Hurst S.M."/>
            <person name="Lucas M."/>
            <person name="Rochet M."/>
            <person name="Gaillardin C."/>
            <person name="Tallada V.A."/>
            <person name="Garzon A."/>
            <person name="Thode G."/>
            <person name="Daga R.R."/>
            <person name="Cruzado L."/>
            <person name="Jimenez J."/>
            <person name="Sanchez M."/>
            <person name="del Rey F."/>
            <person name="Benito J."/>
            <person name="Dominguez A."/>
            <person name="Revuelta J.L."/>
            <person name="Moreno S."/>
            <person name="Armstrong J."/>
            <person name="Forsburg S.L."/>
            <person name="Cerutti L."/>
            <person name="Lowe T."/>
            <person name="McCombie W.R."/>
            <person name="Paulsen I."/>
            <person name="Potashkin J."/>
            <person name="Shpakovski G.V."/>
            <person name="Ussery D."/>
            <person name="Barrell B.G."/>
            <person name="Nurse P."/>
        </authorList>
    </citation>
    <scope>NUCLEOTIDE SEQUENCE [LARGE SCALE GENOMIC DNA]</scope>
    <source>
        <strain>972 / ATCC 24843</strain>
    </source>
</reference>
<evidence type="ECO:0000250" key="1">
    <source>
        <dbReference type="UniProtKB" id="P53252"/>
    </source>
</evidence>
<evidence type="ECO:0000256" key="2">
    <source>
        <dbReference type="SAM" id="MobiDB-lite"/>
    </source>
</evidence>
<evidence type="ECO:0000305" key="3"/>
<evidence type="ECO:0000312" key="4">
    <source>
        <dbReference type="EMBL" id="CAB16733.1"/>
    </source>
</evidence>